<dbReference type="EMBL" id="AL123456">
    <property type="protein sequence ID" value="CCP44312.1"/>
    <property type="molecule type" value="Genomic_DNA"/>
</dbReference>
<dbReference type="PIR" id="A70762">
    <property type="entry name" value="A70762"/>
</dbReference>
<dbReference type="RefSeq" id="WP_010886120.1">
    <property type="nucleotide sequence ID" value="NZ_NVQJ01000004.1"/>
</dbReference>
<dbReference type="RefSeq" id="YP_177817.1">
    <property type="nucleotide sequence ID" value="NC_000962.3"/>
</dbReference>
<dbReference type="STRING" id="83332.Rv1548c"/>
<dbReference type="PaxDb" id="83332-Rv1548c"/>
<dbReference type="GeneID" id="886384"/>
<dbReference type="KEGG" id="mtu:Rv1548c"/>
<dbReference type="KEGG" id="mtv:RVBD_1548c"/>
<dbReference type="TubercuList" id="Rv1548c"/>
<dbReference type="eggNOG" id="COG3210">
    <property type="taxonomic scope" value="Bacteria"/>
</dbReference>
<dbReference type="eggNOG" id="COG5651">
    <property type="taxonomic scope" value="Bacteria"/>
</dbReference>
<dbReference type="InParanoid" id="P9WI21"/>
<dbReference type="OrthoDB" id="4701281at2"/>
<dbReference type="PhylomeDB" id="P9WI21"/>
<dbReference type="Proteomes" id="UP000001584">
    <property type="component" value="Chromosome"/>
</dbReference>
<dbReference type="GO" id="GO:0005886">
    <property type="term" value="C:plasma membrane"/>
    <property type="evidence" value="ECO:0007669"/>
    <property type="project" value="UniProtKB-SubCell"/>
</dbReference>
<dbReference type="GO" id="GO:0052572">
    <property type="term" value="P:response to host immune response"/>
    <property type="evidence" value="ECO:0000318"/>
    <property type="project" value="GO_Central"/>
</dbReference>
<dbReference type="FunFam" id="1.20.1260.20:FF:000001">
    <property type="entry name" value="PPE family protein PPE41"/>
    <property type="match status" value="1"/>
</dbReference>
<dbReference type="Gene3D" id="1.20.1260.20">
    <property type="entry name" value="PPE superfamily"/>
    <property type="match status" value="1"/>
</dbReference>
<dbReference type="InterPro" id="IPR002989">
    <property type="entry name" value="Mycobac_pentapep"/>
</dbReference>
<dbReference type="InterPro" id="IPR000030">
    <property type="entry name" value="PPE_dom"/>
</dbReference>
<dbReference type="InterPro" id="IPR038332">
    <property type="entry name" value="PPE_sf"/>
</dbReference>
<dbReference type="PANTHER" id="PTHR46766">
    <property type="entry name" value="GLUTAMINE-RICH PROTEIN 2"/>
    <property type="match status" value="1"/>
</dbReference>
<dbReference type="PANTHER" id="PTHR46766:SF1">
    <property type="entry name" value="GLUTAMINE-RICH PROTEIN 2"/>
    <property type="match status" value="1"/>
</dbReference>
<dbReference type="Pfam" id="PF01469">
    <property type="entry name" value="Pentapeptide_2"/>
    <property type="match status" value="6"/>
</dbReference>
<dbReference type="Pfam" id="PF00823">
    <property type="entry name" value="PPE"/>
    <property type="match status" value="1"/>
</dbReference>
<dbReference type="SUPFAM" id="SSF140459">
    <property type="entry name" value="PE/PPE dimer-like"/>
    <property type="match status" value="1"/>
</dbReference>
<keyword id="KW-1003">Cell membrane</keyword>
<keyword id="KW-0472">Membrane</keyword>
<keyword id="KW-1185">Reference proteome</keyword>
<keyword id="KW-0812">Transmembrane</keyword>
<keyword id="KW-1133">Transmembrane helix</keyword>
<reference key="1">
    <citation type="journal article" date="1998" name="Nature">
        <title>Deciphering the biology of Mycobacterium tuberculosis from the complete genome sequence.</title>
        <authorList>
            <person name="Cole S.T."/>
            <person name="Brosch R."/>
            <person name="Parkhill J."/>
            <person name="Garnier T."/>
            <person name="Churcher C.M."/>
            <person name="Harris D.E."/>
            <person name="Gordon S.V."/>
            <person name="Eiglmeier K."/>
            <person name="Gas S."/>
            <person name="Barry C.E. III"/>
            <person name="Tekaia F."/>
            <person name="Badcock K."/>
            <person name="Basham D."/>
            <person name="Brown D."/>
            <person name="Chillingworth T."/>
            <person name="Connor R."/>
            <person name="Davies R.M."/>
            <person name="Devlin K."/>
            <person name="Feltwell T."/>
            <person name="Gentles S."/>
            <person name="Hamlin N."/>
            <person name="Holroyd S."/>
            <person name="Hornsby T."/>
            <person name="Jagels K."/>
            <person name="Krogh A."/>
            <person name="McLean J."/>
            <person name="Moule S."/>
            <person name="Murphy L.D."/>
            <person name="Oliver S."/>
            <person name="Osborne J."/>
            <person name="Quail M.A."/>
            <person name="Rajandream M.A."/>
            <person name="Rogers J."/>
            <person name="Rutter S."/>
            <person name="Seeger K."/>
            <person name="Skelton S."/>
            <person name="Squares S."/>
            <person name="Squares R."/>
            <person name="Sulston J.E."/>
            <person name="Taylor K."/>
            <person name="Whitehead S."/>
            <person name="Barrell B.G."/>
        </authorList>
    </citation>
    <scope>NUCLEOTIDE SEQUENCE [LARGE SCALE GENOMIC DNA]</scope>
    <source>
        <strain>ATCC 25618 / H37Rv</strain>
    </source>
</reference>
<name>PPE21_MYCTU</name>
<protein>
    <recommendedName>
        <fullName>Uncharacterized PPE family protein PPE21</fullName>
    </recommendedName>
</protein>
<sequence length="678" mass="66737">MNFSVLPPEINSALMFAGAGPGPMLAAASAWTGLAGDLGSAAASFSAVTSQLATGSWQGPASAAMTGVAASYARWLTTAAAQAEQAAGQAQAAVSAFEAALAATVHPGAVSANRGRLRSLVASNLLGQNAPAIAAVEAVYEQMWAADVAAMLGYHGEASAVALSLTPFTPSPSAAATPGGAVIIAGFPFLDLGNVTIGGFNLASGNLGLGNLGSFNPGSANTGSVNLGNANIGDLNLGSGNIGSYNLGGGNTGDLNPDSGNTGTLNWGSGNIGSYNLGGGNLGSYNLGSGNTGDTNFGGGNTGNLNVGGGNTGNSNFGFGNTGNVNFGNGNTGDTNFGSGNLGSGNIGFGNKGSHNIGFGNSGNNNIGFGLTGDNQIGFGALNSGSGNLGFGNSGNGNIGFFNSGNNNIGMGNSGNGVGALSVEFGSSAERSSGFGNSGELSTGIGNSGQLSTGWFNSATTSTGWFNSGTTNTGWFNSGTTNTGIGNSGGNLVTGSMGLFNSGHTNTGSFNAGSMNTGDFNSGNVNTGYFNSGNINTGFFNSGDLNTGLFNSVNQPVQNSGWLHTGTNNSGYANAGTFNSGFDNNARDEHAEFVTGNSGLANVGNYNAGIINVGDHLSGFRNSVPTITGTANISGFVNAGTSISGFFNFGSLMSGFANFDDEVSGYLNGDSRASGWIH</sequence>
<proteinExistence type="inferred from homology"/>
<feature type="chain" id="PRO_0000217846" description="Uncharacterized PPE family protein PPE21">
    <location>
        <begin position="1"/>
        <end position="678"/>
    </location>
</feature>
<feature type="transmembrane region" description="Helical" evidence="1">
    <location>
        <begin position="14"/>
        <end position="34"/>
    </location>
</feature>
<feature type="transmembrane region" description="Helical" evidence="1">
    <location>
        <begin position="180"/>
        <end position="200"/>
    </location>
</feature>
<evidence type="ECO:0000255" key="1"/>
<evidence type="ECO:0000305" key="2"/>
<accession>P9WI21</accession>
<accession>L0T761</accession>
<accession>Q10778</accession>
<organism>
    <name type="scientific">Mycobacterium tuberculosis (strain ATCC 25618 / H37Rv)</name>
    <dbReference type="NCBI Taxonomy" id="83332"/>
    <lineage>
        <taxon>Bacteria</taxon>
        <taxon>Bacillati</taxon>
        <taxon>Actinomycetota</taxon>
        <taxon>Actinomycetes</taxon>
        <taxon>Mycobacteriales</taxon>
        <taxon>Mycobacteriaceae</taxon>
        <taxon>Mycobacterium</taxon>
        <taxon>Mycobacterium tuberculosis complex</taxon>
    </lineage>
</organism>
<comment type="subcellular location">
    <subcellularLocation>
        <location evidence="2">Cell membrane</location>
        <topology evidence="2">Multi-pass membrane protein</topology>
    </subcellularLocation>
</comment>
<comment type="similarity">
    <text evidence="2">Belongs to the mycobacterial PPE family.</text>
</comment>
<gene>
    <name type="primary">PPE21</name>
    <name type="ordered locus">Rv1548c</name>
    <name type="ORF">MTCY48.17</name>
</gene>